<reference key="1">
    <citation type="journal article" date="2005" name="J. Bacteriol.">
        <title>Completion of the genome sequence of Brucella abortus and comparison to the highly similar genomes of Brucella melitensis and Brucella suis.</title>
        <authorList>
            <person name="Halling S.M."/>
            <person name="Peterson-Burch B.D."/>
            <person name="Bricker B.J."/>
            <person name="Zuerner R.L."/>
            <person name="Qing Z."/>
            <person name="Li L.-L."/>
            <person name="Kapur V."/>
            <person name="Alt D.P."/>
            <person name="Olsen S.C."/>
        </authorList>
    </citation>
    <scope>NUCLEOTIDE SEQUENCE [LARGE SCALE GENOMIC DNA]</scope>
    <source>
        <strain>9-941</strain>
    </source>
</reference>
<proteinExistence type="inferred from homology"/>
<sequence length="268" mass="27605">MGLVVVGAGGRMGQTLIRTIQSIEGAKLVGAIERSGSPFLGKDAGEVTGIGTLGVAITDDPLPVFAKAHGVLDFTSPAASVEFAGLAAQARIVHVIGTTGCSAEDDEKIRAAARHATIVKSGNMSLGVNLLSVLVQKAAEALGPEDFDIEILEMHHRHKVDAPSGTALLLGEAAARGRDIALADNSVRVRDGYTGPRETGAIGFATLRGGSVIGDHSVILAGTGERVVLSHHAEDRSIFARGAIKAALWAHGKKPGLYSMLDVLGLNT</sequence>
<gene>
    <name evidence="1" type="primary">dapB</name>
    <name type="ordered locus">BruAb2_0991</name>
</gene>
<dbReference type="EC" id="1.17.1.8" evidence="1"/>
<dbReference type="EMBL" id="AE017224">
    <property type="protein sequence ID" value="AAX76370.1"/>
    <property type="molecule type" value="Genomic_DNA"/>
</dbReference>
<dbReference type="SMR" id="Q576R4"/>
<dbReference type="EnsemblBacteria" id="AAX76370">
    <property type="protein sequence ID" value="AAX76370"/>
    <property type="gene ID" value="BruAb2_0991"/>
</dbReference>
<dbReference type="KEGG" id="bmb:BruAb2_0991"/>
<dbReference type="HOGENOM" id="CLU_047479_2_1_5"/>
<dbReference type="UniPathway" id="UPA00034">
    <property type="reaction ID" value="UER00018"/>
</dbReference>
<dbReference type="Proteomes" id="UP000000540">
    <property type="component" value="Chromosome II"/>
</dbReference>
<dbReference type="GO" id="GO:0005829">
    <property type="term" value="C:cytosol"/>
    <property type="evidence" value="ECO:0007669"/>
    <property type="project" value="TreeGrafter"/>
</dbReference>
<dbReference type="GO" id="GO:0008839">
    <property type="term" value="F:4-hydroxy-tetrahydrodipicolinate reductase"/>
    <property type="evidence" value="ECO:0007669"/>
    <property type="project" value="UniProtKB-EC"/>
</dbReference>
<dbReference type="GO" id="GO:0051287">
    <property type="term" value="F:NAD binding"/>
    <property type="evidence" value="ECO:0007669"/>
    <property type="project" value="UniProtKB-UniRule"/>
</dbReference>
<dbReference type="GO" id="GO:0050661">
    <property type="term" value="F:NADP binding"/>
    <property type="evidence" value="ECO:0007669"/>
    <property type="project" value="UniProtKB-UniRule"/>
</dbReference>
<dbReference type="GO" id="GO:0016726">
    <property type="term" value="F:oxidoreductase activity, acting on CH or CH2 groups, NAD or NADP as acceptor"/>
    <property type="evidence" value="ECO:0007669"/>
    <property type="project" value="UniProtKB-UniRule"/>
</dbReference>
<dbReference type="GO" id="GO:0019877">
    <property type="term" value="P:diaminopimelate biosynthetic process"/>
    <property type="evidence" value="ECO:0007669"/>
    <property type="project" value="UniProtKB-UniRule"/>
</dbReference>
<dbReference type="GO" id="GO:0009089">
    <property type="term" value="P:lysine biosynthetic process via diaminopimelate"/>
    <property type="evidence" value="ECO:0007669"/>
    <property type="project" value="UniProtKB-UniRule"/>
</dbReference>
<dbReference type="CDD" id="cd02274">
    <property type="entry name" value="DHDPR_N"/>
    <property type="match status" value="1"/>
</dbReference>
<dbReference type="FunFam" id="3.30.360.10:FF:000004">
    <property type="entry name" value="4-hydroxy-tetrahydrodipicolinate reductase"/>
    <property type="match status" value="1"/>
</dbReference>
<dbReference type="Gene3D" id="3.30.360.10">
    <property type="entry name" value="Dihydrodipicolinate Reductase, domain 2"/>
    <property type="match status" value="1"/>
</dbReference>
<dbReference type="Gene3D" id="3.40.50.720">
    <property type="entry name" value="NAD(P)-binding Rossmann-like Domain"/>
    <property type="match status" value="1"/>
</dbReference>
<dbReference type="HAMAP" id="MF_00102">
    <property type="entry name" value="DapB"/>
    <property type="match status" value="1"/>
</dbReference>
<dbReference type="InterPro" id="IPR022663">
    <property type="entry name" value="DapB_C"/>
</dbReference>
<dbReference type="InterPro" id="IPR000846">
    <property type="entry name" value="DapB_N"/>
</dbReference>
<dbReference type="InterPro" id="IPR022664">
    <property type="entry name" value="DapB_N_CS"/>
</dbReference>
<dbReference type="InterPro" id="IPR023940">
    <property type="entry name" value="DHDPR_bac"/>
</dbReference>
<dbReference type="InterPro" id="IPR036291">
    <property type="entry name" value="NAD(P)-bd_dom_sf"/>
</dbReference>
<dbReference type="NCBIfam" id="TIGR00036">
    <property type="entry name" value="dapB"/>
    <property type="match status" value="1"/>
</dbReference>
<dbReference type="PANTHER" id="PTHR20836:SF0">
    <property type="entry name" value="4-HYDROXY-TETRAHYDRODIPICOLINATE REDUCTASE 1, CHLOROPLASTIC-RELATED"/>
    <property type="match status" value="1"/>
</dbReference>
<dbReference type="PANTHER" id="PTHR20836">
    <property type="entry name" value="DIHYDRODIPICOLINATE REDUCTASE"/>
    <property type="match status" value="1"/>
</dbReference>
<dbReference type="Pfam" id="PF05173">
    <property type="entry name" value="DapB_C"/>
    <property type="match status" value="1"/>
</dbReference>
<dbReference type="Pfam" id="PF01113">
    <property type="entry name" value="DapB_N"/>
    <property type="match status" value="1"/>
</dbReference>
<dbReference type="PIRSF" id="PIRSF000161">
    <property type="entry name" value="DHPR"/>
    <property type="match status" value="1"/>
</dbReference>
<dbReference type="SUPFAM" id="SSF55347">
    <property type="entry name" value="Glyceraldehyde-3-phosphate dehydrogenase-like, C-terminal domain"/>
    <property type="match status" value="1"/>
</dbReference>
<dbReference type="SUPFAM" id="SSF51735">
    <property type="entry name" value="NAD(P)-binding Rossmann-fold domains"/>
    <property type="match status" value="1"/>
</dbReference>
<dbReference type="PROSITE" id="PS01298">
    <property type="entry name" value="DAPB"/>
    <property type="match status" value="1"/>
</dbReference>
<organism>
    <name type="scientific">Brucella abortus biovar 1 (strain 9-941)</name>
    <dbReference type="NCBI Taxonomy" id="262698"/>
    <lineage>
        <taxon>Bacteria</taxon>
        <taxon>Pseudomonadati</taxon>
        <taxon>Pseudomonadota</taxon>
        <taxon>Alphaproteobacteria</taxon>
        <taxon>Hyphomicrobiales</taxon>
        <taxon>Brucellaceae</taxon>
        <taxon>Brucella/Ochrobactrum group</taxon>
        <taxon>Brucella</taxon>
    </lineage>
</organism>
<accession>Q576R4</accession>
<protein>
    <recommendedName>
        <fullName evidence="1">4-hydroxy-tetrahydrodipicolinate reductase</fullName>
        <shortName evidence="1">HTPA reductase</shortName>
        <ecNumber evidence="1">1.17.1.8</ecNumber>
    </recommendedName>
</protein>
<evidence type="ECO:0000255" key="1">
    <source>
        <dbReference type="HAMAP-Rule" id="MF_00102"/>
    </source>
</evidence>
<evidence type="ECO:0000305" key="2"/>
<keyword id="KW-0028">Amino-acid biosynthesis</keyword>
<keyword id="KW-0963">Cytoplasm</keyword>
<keyword id="KW-0220">Diaminopimelate biosynthesis</keyword>
<keyword id="KW-0457">Lysine biosynthesis</keyword>
<keyword id="KW-0520">NAD</keyword>
<keyword id="KW-0521">NADP</keyword>
<keyword id="KW-0560">Oxidoreductase</keyword>
<comment type="function">
    <text evidence="1">Catalyzes the conversion of 4-hydroxy-tetrahydrodipicolinate (HTPA) to tetrahydrodipicolinate.</text>
</comment>
<comment type="catalytic activity">
    <reaction evidence="1">
        <text>(S)-2,3,4,5-tetrahydrodipicolinate + NAD(+) + H2O = (2S,4S)-4-hydroxy-2,3,4,5-tetrahydrodipicolinate + NADH + H(+)</text>
        <dbReference type="Rhea" id="RHEA:35323"/>
        <dbReference type="ChEBI" id="CHEBI:15377"/>
        <dbReference type="ChEBI" id="CHEBI:15378"/>
        <dbReference type="ChEBI" id="CHEBI:16845"/>
        <dbReference type="ChEBI" id="CHEBI:57540"/>
        <dbReference type="ChEBI" id="CHEBI:57945"/>
        <dbReference type="ChEBI" id="CHEBI:67139"/>
        <dbReference type="EC" id="1.17.1.8"/>
    </reaction>
</comment>
<comment type="catalytic activity">
    <reaction evidence="1">
        <text>(S)-2,3,4,5-tetrahydrodipicolinate + NADP(+) + H2O = (2S,4S)-4-hydroxy-2,3,4,5-tetrahydrodipicolinate + NADPH + H(+)</text>
        <dbReference type="Rhea" id="RHEA:35331"/>
        <dbReference type="ChEBI" id="CHEBI:15377"/>
        <dbReference type="ChEBI" id="CHEBI:15378"/>
        <dbReference type="ChEBI" id="CHEBI:16845"/>
        <dbReference type="ChEBI" id="CHEBI:57783"/>
        <dbReference type="ChEBI" id="CHEBI:58349"/>
        <dbReference type="ChEBI" id="CHEBI:67139"/>
        <dbReference type="EC" id="1.17.1.8"/>
    </reaction>
</comment>
<comment type="pathway">
    <text evidence="1">Amino-acid biosynthesis; L-lysine biosynthesis via DAP pathway; (S)-tetrahydrodipicolinate from L-aspartate: step 4/4.</text>
</comment>
<comment type="subcellular location">
    <subcellularLocation>
        <location evidence="1">Cytoplasm</location>
    </subcellularLocation>
</comment>
<comment type="similarity">
    <text evidence="1">Belongs to the DapB family.</text>
</comment>
<comment type="caution">
    <text evidence="2">Was originally thought to be a dihydrodipicolinate reductase (DHDPR), catalyzing the conversion of dihydrodipicolinate to tetrahydrodipicolinate. However, it was shown in E.coli that the substrate of the enzymatic reaction is not dihydrodipicolinate (DHDP) but in fact (2S,4S)-4-hydroxy-2,3,4,5-tetrahydrodipicolinic acid (HTPA), the product released by the DapA-catalyzed reaction.</text>
</comment>
<name>DAPB_BRUAB</name>
<feature type="chain" id="PRO_0000228330" description="4-hydroxy-tetrahydrodipicolinate reductase">
    <location>
        <begin position="1"/>
        <end position="268"/>
    </location>
</feature>
<feature type="active site" description="Proton donor/acceptor" evidence="1">
    <location>
        <position position="155"/>
    </location>
</feature>
<feature type="active site" description="Proton donor" evidence="1">
    <location>
        <position position="159"/>
    </location>
</feature>
<feature type="binding site" evidence="1">
    <location>
        <begin position="7"/>
        <end position="12"/>
    </location>
    <ligand>
        <name>NAD(+)</name>
        <dbReference type="ChEBI" id="CHEBI:57540"/>
    </ligand>
</feature>
<feature type="binding site" evidence="1">
    <location>
        <position position="33"/>
    </location>
    <ligand>
        <name>NAD(+)</name>
        <dbReference type="ChEBI" id="CHEBI:57540"/>
    </ligand>
</feature>
<feature type="binding site" evidence="1">
    <location>
        <position position="34"/>
    </location>
    <ligand>
        <name>NADP(+)</name>
        <dbReference type="ChEBI" id="CHEBI:58349"/>
    </ligand>
</feature>
<feature type="binding site" evidence="1">
    <location>
        <begin position="97"/>
        <end position="99"/>
    </location>
    <ligand>
        <name>NAD(+)</name>
        <dbReference type="ChEBI" id="CHEBI:57540"/>
    </ligand>
</feature>
<feature type="binding site" evidence="1">
    <location>
        <begin position="121"/>
        <end position="124"/>
    </location>
    <ligand>
        <name>NAD(+)</name>
        <dbReference type="ChEBI" id="CHEBI:57540"/>
    </ligand>
</feature>
<feature type="binding site" evidence="1">
    <location>
        <position position="156"/>
    </location>
    <ligand>
        <name>(S)-2,3,4,5-tetrahydrodipicolinate</name>
        <dbReference type="ChEBI" id="CHEBI:16845"/>
    </ligand>
</feature>
<feature type="binding site" evidence="1">
    <location>
        <begin position="165"/>
        <end position="166"/>
    </location>
    <ligand>
        <name>(S)-2,3,4,5-tetrahydrodipicolinate</name>
        <dbReference type="ChEBI" id="CHEBI:16845"/>
    </ligand>
</feature>